<proteinExistence type="evidence at protein level"/>
<protein>
    <recommendedName>
        <fullName>Cardio-excitatory peptide 1</fullName>
        <shortName>ACEP-1</shortName>
    </recommendedName>
</protein>
<name>CEP1_LISFU</name>
<reference key="1">
    <citation type="journal article" date="1990" name="Biochem. Biophys. Res. Commun.">
        <title>A novel cardio-excitatory peptide isolated from the atria of the African giant snail, Achatina fulica.</title>
        <authorList>
            <person name="Fujimoto K."/>
            <person name="Ohta N."/>
            <person name="Yoshida M."/>
            <person name="Kubota I."/>
            <person name="Muneoka Y."/>
            <person name="Kobayashi M."/>
        </authorList>
    </citation>
    <scope>PROTEIN SEQUENCE</scope>
    <scope>AMIDATION AT PHE-11</scope>
    <source>
        <strain>Ferussac</strain>
        <tissue>Heart atrium</tissue>
    </source>
</reference>
<comment type="function">
    <text>Potentiates the beat of the ventricle, and also has excitatory actions on the penis retractor muscle, the buccal muscle and the identified neurons controlling the buccal muscle movement of achatina.</text>
</comment>
<comment type="subcellular location">
    <subcellularLocation>
        <location>Secreted</location>
    </subcellularLocation>
</comment>
<evidence type="ECO:0000269" key="1">
    <source>
    </source>
</evidence>
<sequence>SGQSWRPQGRF</sequence>
<keyword id="KW-0027">Amidation</keyword>
<keyword id="KW-0903">Direct protein sequencing</keyword>
<keyword id="KW-0372">Hormone</keyword>
<keyword id="KW-0964">Secreted</keyword>
<accession>P22790</accession>
<feature type="peptide" id="PRO_0000043487" description="Cardio-excitatory peptide 1">
    <location>
        <begin position="1"/>
        <end position="11"/>
    </location>
</feature>
<feature type="modified residue" description="Phenylalanine amide" evidence="1">
    <location>
        <position position="11"/>
    </location>
</feature>
<dbReference type="PIR" id="A34662">
    <property type="entry name" value="A34662"/>
</dbReference>
<dbReference type="GO" id="GO:0005576">
    <property type="term" value="C:extracellular region"/>
    <property type="evidence" value="ECO:0007669"/>
    <property type="project" value="UniProtKB-SubCell"/>
</dbReference>
<dbReference type="GO" id="GO:0005179">
    <property type="term" value="F:hormone activity"/>
    <property type="evidence" value="ECO:0007669"/>
    <property type="project" value="UniProtKB-KW"/>
</dbReference>
<organism>
    <name type="scientific">Lissachatina fulica</name>
    <name type="common">Giant African land snail</name>
    <name type="synonym">Achatina fulica</name>
    <dbReference type="NCBI Taxonomy" id="2315439"/>
    <lineage>
        <taxon>Eukaryota</taxon>
        <taxon>Metazoa</taxon>
        <taxon>Spiralia</taxon>
        <taxon>Lophotrochozoa</taxon>
        <taxon>Mollusca</taxon>
        <taxon>Gastropoda</taxon>
        <taxon>Heterobranchia</taxon>
        <taxon>Euthyneura</taxon>
        <taxon>Panpulmonata</taxon>
        <taxon>Eupulmonata</taxon>
        <taxon>Stylommatophora</taxon>
        <taxon>Helicina</taxon>
        <taxon>Achatinoidea</taxon>
        <taxon>Achatinidae</taxon>
        <taxon>Lissachatina</taxon>
    </lineage>
</organism>